<dbReference type="GO" id="GO:0005576">
    <property type="term" value="C:extracellular region"/>
    <property type="evidence" value="ECO:0007669"/>
    <property type="project" value="UniProtKB-SubCell"/>
</dbReference>
<dbReference type="GO" id="GO:0030414">
    <property type="term" value="F:peptidase inhibitor activity"/>
    <property type="evidence" value="ECO:0007669"/>
    <property type="project" value="UniProtKB-KW"/>
</dbReference>
<dbReference type="GO" id="GO:0090729">
    <property type="term" value="F:toxin activity"/>
    <property type="evidence" value="ECO:0007669"/>
    <property type="project" value="UniProtKB-KW"/>
</dbReference>
<dbReference type="GO" id="GO:0008217">
    <property type="term" value="P:regulation of blood pressure"/>
    <property type="evidence" value="ECO:0007669"/>
    <property type="project" value="UniProtKB-KW"/>
</dbReference>
<accession>P85161</accession>
<sequence>QGRPPGPPIPP</sequence>
<keyword id="KW-0903">Direct protein sequencing</keyword>
<keyword id="KW-0382">Hypotensive agent</keyword>
<keyword id="KW-0481">Metalloenzyme inhibitor</keyword>
<keyword id="KW-0483">Metalloprotease inhibitor</keyword>
<keyword id="KW-0646">Protease inhibitor</keyword>
<keyword id="KW-0873">Pyrrolidone carboxylic acid</keyword>
<keyword id="KW-0964">Secreted</keyword>
<keyword id="KW-0800">Toxin</keyword>
<feature type="peptide" id="PRO_0000292920" description="Bradykinin-potentiating peptide 11d" evidence="1">
    <location>
        <begin position="1"/>
        <end position="11"/>
    </location>
</feature>
<feature type="modified residue" description="Pyrrolidone carboxylic acid" evidence="1 2">
    <location>
        <position position="1"/>
    </location>
</feature>
<name>BPPBD_BOTJA</name>
<protein>
    <recommendedName>
        <fullName>Bradykinin-potentiating peptide 11d</fullName>
        <shortName>BPP-11d</shortName>
    </recommendedName>
</protein>
<reference evidence="3" key="1">
    <citation type="journal article" date="2004" name="Peptides">
        <title>Identification of five new bradykinin potentiating peptides (BPPs) from Bothrops jararaca crude venom by using electrospray ionization tandem mass spectrometry after a two-step liquid chromatography.</title>
        <authorList>
            <person name="Ianzer D."/>
            <person name="Konno K."/>
            <person name="Marques-Porto R."/>
            <person name="Portaro F.C.V."/>
            <person name="Stoecklin R."/>
            <person name="de Camargo A.C.M."/>
            <person name="Pimenta D.C."/>
        </authorList>
    </citation>
    <scope>PROTEIN SEQUENCE</scope>
    <scope>FUNCTION</scope>
    <scope>SUBCELLULAR LOCATION</scope>
    <scope>TISSUE SPECIFICITY</scope>
    <scope>MASS SPECTROMETRY</scope>
    <scope>PYROGLUTAMATE FORMATION AT GLN-1</scope>
    <source>
        <tissue evidence="1">Venom</tissue>
    </source>
</reference>
<reference key="2">
    <citation type="journal article" date="2012" name="Mol. Cell. Proteomics">
        <title>Peptidomics of three Bothrops snake venoms: insights into the molecular diversification of proteomes and peptidomes.</title>
        <authorList>
            <person name="Tashima A.K."/>
            <person name="Zelanis A."/>
            <person name="Kitano E.S."/>
            <person name="Ianzer D."/>
            <person name="Melo R.L."/>
            <person name="Rioli V."/>
            <person name="Sant'anna S.S."/>
            <person name="Schenberg A.C."/>
            <person name="Camargo A.C."/>
            <person name="Serrano S.M.T."/>
        </authorList>
    </citation>
    <scope>PROTEIN SEQUENCE</scope>
    <scope>PYROGLUTAMATE FORMATION AT GLN-1</scope>
    <scope>MASS SPECTROMETRY</scope>
    <source>
        <tissue>Venom</tissue>
    </source>
</reference>
<proteinExistence type="evidence at protein level"/>
<comment type="function">
    <text evidence="1">This peptide both inhibits the activity of the angiotensin-converting enzyme (ACE) and enhances the action of bradykinin by inhibiting the peptidases that inactivate it. It acts as an indirect hypotensive agent.</text>
</comment>
<comment type="subcellular location">
    <subcellularLocation>
        <location evidence="1">Secreted</location>
    </subcellularLocation>
</comment>
<comment type="tissue specificity">
    <text evidence="1">Expressed by the venom gland.</text>
</comment>
<comment type="mass spectrometry"/>
<comment type="mass spectrometry"/>
<comment type="similarity">
    <text evidence="3">Belongs to the bradykinin-potentiating peptide family.</text>
</comment>
<evidence type="ECO:0000269" key="1">
    <source>
    </source>
</evidence>
<evidence type="ECO:0000269" key="2">
    <source>
    </source>
</evidence>
<evidence type="ECO:0000305" key="3"/>
<organism>
    <name type="scientific">Bothrops jararaca</name>
    <name type="common">Jararaca</name>
    <name type="synonym">Bothrops jajaraca</name>
    <dbReference type="NCBI Taxonomy" id="8724"/>
    <lineage>
        <taxon>Eukaryota</taxon>
        <taxon>Metazoa</taxon>
        <taxon>Chordata</taxon>
        <taxon>Craniata</taxon>
        <taxon>Vertebrata</taxon>
        <taxon>Euteleostomi</taxon>
        <taxon>Lepidosauria</taxon>
        <taxon>Squamata</taxon>
        <taxon>Bifurcata</taxon>
        <taxon>Unidentata</taxon>
        <taxon>Episquamata</taxon>
        <taxon>Toxicofera</taxon>
        <taxon>Serpentes</taxon>
        <taxon>Colubroidea</taxon>
        <taxon>Viperidae</taxon>
        <taxon>Crotalinae</taxon>
        <taxon>Bothrops</taxon>
    </lineage>
</organism>